<dbReference type="EMBL" id="AB060687">
    <property type="protein sequence ID" value="BAB43947.1"/>
    <property type="molecule type" value="mRNA"/>
</dbReference>
<dbReference type="RefSeq" id="NP_001009223.1">
    <property type="nucleotide sequence ID" value="NM_001009223.1"/>
</dbReference>
<dbReference type="SMR" id="P58727"/>
<dbReference type="STRING" id="9685.ENSFCAP00000023731"/>
<dbReference type="GlyCosmos" id="P58727">
    <property type="glycosylation" value="10 sites, No reported glycans"/>
</dbReference>
<dbReference type="PaxDb" id="9685-ENSFCAP00000023731"/>
<dbReference type="GeneID" id="493698"/>
<dbReference type="KEGG" id="fca:493698"/>
<dbReference type="CTD" id="7099"/>
<dbReference type="eggNOG" id="KOG4641">
    <property type="taxonomic scope" value="Eukaryota"/>
</dbReference>
<dbReference type="InParanoid" id="P58727"/>
<dbReference type="OrthoDB" id="1421090at2759"/>
<dbReference type="Proteomes" id="UP000011712">
    <property type="component" value="Unplaced"/>
</dbReference>
<dbReference type="GO" id="GO:0005769">
    <property type="term" value="C:early endosome"/>
    <property type="evidence" value="ECO:0007669"/>
    <property type="project" value="UniProtKB-SubCell"/>
</dbReference>
<dbReference type="GO" id="GO:0046696">
    <property type="term" value="C:lipopolysaccharide receptor complex"/>
    <property type="evidence" value="ECO:0000250"/>
    <property type="project" value="UniProtKB"/>
</dbReference>
<dbReference type="GO" id="GO:0005886">
    <property type="term" value="C:plasma membrane"/>
    <property type="evidence" value="ECO:0000250"/>
    <property type="project" value="UniProtKB"/>
</dbReference>
<dbReference type="GO" id="GO:0001726">
    <property type="term" value="C:ruffle"/>
    <property type="evidence" value="ECO:0007669"/>
    <property type="project" value="UniProtKB-SubCell"/>
</dbReference>
<dbReference type="GO" id="GO:0001530">
    <property type="term" value="F:lipopolysaccharide binding"/>
    <property type="evidence" value="ECO:0000318"/>
    <property type="project" value="GO_Central"/>
</dbReference>
<dbReference type="GO" id="GO:0001875">
    <property type="term" value="F:lipopolysaccharide immune receptor activity"/>
    <property type="evidence" value="ECO:0000250"/>
    <property type="project" value="UniProtKB"/>
</dbReference>
<dbReference type="GO" id="GO:0061809">
    <property type="term" value="F:NAD+ nucleosidase activity, cyclic ADP-ribose generating"/>
    <property type="evidence" value="ECO:0007669"/>
    <property type="project" value="UniProtKB-EC"/>
</dbReference>
<dbReference type="GO" id="GO:0004888">
    <property type="term" value="F:transmembrane signaling receptor activity"/>
    <property type="evidence" value="ECO:0007669"/>
    <property type="project" value="InterPro"/>
</dbReference>
<dbReference type="GO" id="GO:0050829">
    <property type="term" value="P:defense response to Gram-negative bacterium"/>
    <property type="evidence" value="ECO:0000318"/>
    <property type="project" value="GO_Central"/>
</dbReference>
<dbReference type="GO" id="GO:0032497">
    <property type="term" value="P:detection of lipopolysaccharide"/>
    <property type="evidence" value="ECO:0000250"/>
    <property type="project" value="UniProtKB"/>
</dbReference>
<dbReference type="GO" id="GO:0006954">
    <property type="term" value="P:inflammatory response"/>
    <property type="evidence" value="ECO:0000318"/>
    <property type="project" value="GO_Central"/>
</dbReference>
<dbReference type="GO" id="GO:0045087">
    <property type="term" value="P:innate immune response"/>
    <property type="evidence" value="ECO:0007669"/>
    <property type="project" value="UniProtKB-KW"/>
</dbReference>
<dbReference type="GO" id="GO:0042116">
    <property type="term" value="P:macrophage activation"/>
    <property type="evidence" value="ECO:0000250"/>
    <property type="project" value="UniProtKB"/>
</dbReference>
<dbReference type="GO" id="GO:0002755">
    <property type="term" value="P:MyD88-dependent toll-like receptor signaling pathway"/>
    <property type="evidence" value="ECO:0000318"/>
    <property type="project" value="GO_Central"/>
</dbReference>
<dbReference type="GO" id="GO:0032731">
    <property type="term" value="P:positive regulation of interleukin-1 beta production"/>
    <property type="evidence" value="ECO:0000250"/>
    <property type="project" value="UniProtKB"/>
</dbReference>
<dbReference type="GO" id="GO:1900227">
    <property type="term" value="P:positive regulation of NLRP3 inflammasome complex assembly"/>
    <property type="evidence" value="ECO:0000250"/>
    <property type="project" value="UniProtKB"/>
</dbReference>
<dbReference type="GO" id="GO:0034142">
    <property type="term" value="P:toll-like receptor 4 signaling pathway"/>
    <property type="evidence" value="ECO:0000318"/>
    <property type="project" value="GO_Central"/>
</dbReference>
<dbReference type="FunFam" id="3.40.50.10140:FF:000006">
    <property type="entry name" value="Toll-like receptor 4"/>
    <property type="match status" value="1"/>
</dbReference>
<dbReference type="FunFam" id="3.80.10.10:FF:000195">
    <property type="entry name" value="Toll-like receptor 4"/>
    <property type="match status" value="1"/>
</dbReference>
<dbReference type="Gene3D" id="3.80.10.10">
    <property type="entry name" value="Ribonuclease Inhibitor"/>
    <property type="match status" value="1"/>
</dbReference>
<dbReference type="Gene3D" id="3.40.50.10140">
    <property type="entry name" value="Toll/interleukin-1 receptor homology (TIR) domain"/>
    <property type="match status" value="1"/>
</dbReference>
<dbReference type="InterPro" id="IPR000483">
    <property type="entry name" value="Cys-rich_flank_reg_C"/>
</dbReference>
<dbReference type="InterPro" id="IPR001611">
    <property type="entry name" value="Leu-rich_rpt"/>
</dbReference>
<dbReference type="InterPro" id="IPR003591">
    <property type="entry name" value="Leu-rich_rpt_typical-subtyp"/>
</dbReference>
<dbReference type="InterPro" id="IPR032675">
    <property type="entry name" value="LRR_dom_sf"/>
</dbReference>
<dbReference type="InterPro" id="IPR000157">
    <property type="entry name" value="TIR_dom"/>
</dbReference>
<dbReference type="InterPro" id="IPR017241">
    <property type="entry name" value="Toll-like_receptor"/>
</dbReference>
<dbReference type="InterPro" id="IPR035897">
    <property type="entry name" value="Toll_tir_struct_dom_sf"/>
</dbReference>
<dbReference type="PANTHER" id="PTHR24365">
    <property type="entry name" value="TOLL-LIKE RECEPTOR"/>
    <property type="match status" value="1"/>
</dbReference>
<dbReference type="PANTHER" id="PTHR24365:SF521">
    <property type="entry name" value="TOLL-LIKE RECEPTOR 4"/>
    <property type="match status" value="1"/>
</dbReference>
<dbReference type="Pfam" id="PF00560">
    <property type="entry name" value="LRR_1"/>
    <property type="match status" value="1"/>
</dbReference>
<dbReference type="Pfam" id="PF13855">
    <property type="entry name" value="LRR_8"/>
    <property type="match status" value="3"/>
</dbReference>
<dbReference type="Pfam" id="PF01582">
    <property type="entry name" value="TIR"/>
    <property type="match status" value="1"/>
</dbReference>
<dbReference type="PIRSF" id="PIRSF037595">
    <property type="entry name" value="Toll-like_receptor"/>
    <property type="match status" value="1"/>
</dbReference>
<dbReference type="PRINTS" id="PR00019">
    <property type="entry name" value="LEURICHRPT"/>
</dbReference>
<dbReference type="SMART" id="SM00365">
    <property type="entry name" value="LRR_SD22"/>
    <property type="match status" value="7"/>
</dbReference>
<dbReference type="SMART" id="SM00369">
    <property type="entry name" value="LRR_TYP"/>
    <property type="match status" value="9"/>
</dbReference>
<dbReference type="SMART" id="SM00082">
    <property type="entry name" value="LRRCT"/>
    <property type="match status" value="1"/>
</dbReference>
<dbReference type="SMART" id="SM00255">
    <property type="entry name" value="TIR"/>
    <property type="match status" value="1"/>
</dbReference>
<dbReference type="SUPFAM" id="SSF52075">
    <property type="entry name" value="Outer arm dynein light chain 1"/>
    <property type="match status" value="1"/>
</dbReference>
<dbReference type="SUPFAM" id="SSF52047">
    <property type="entry name" value="RNI-like"/>
    <property type="match status" value="1"/>
</dbReference>
<dbReference type="SUPFAM" id="SSF52200">
    <property type="entry name" value="Toll/Interleukin receptor TIR domain"/>
    <property type="match status" value="1"/>
</dbReference>
<dbReference type="PROSITE" id="PS51450">
    <property type="entry name" value="LRR"/>
    <property type="match status" value="13"/>
</dbReference>
<dbReference type="PROSITE" id="PS50104">
    <property type="entry name" value="TIR"/>
    <property type="match status" value="1"/>
</dbReference>
<reference key="1">
    <citation type="submission" date="2001-04" db="EMBL/GenBank/DDBJ databases">
        <title>Felis catus Toll like receptor 4.</title>
        <authorList>
            <person name="Yoshioka N."/>
            <person name="Kano R."/>
        </authorList>
    </citation>
    <scope>NUCLEOTIDE SEQUENCE [MRNA]</scope>
</reference>
<keyword id="KW-1003">Cell membrane</keyword>
<keyword id="KW-0966">Cell projection</keyword>
<keyword id="KW-1015">Disulfide bond</keyword>
<keyword id="KW-0967">Endosome</keyword>
<keyword id="KW-0325">Glycoprotein</keyword>
<keyword id="KW-0391">Immunity</keyword>
<keyword id="KW-0395">Inflammatory response</keyword>
<keyword id="KW-0399">Innate immunity</keyword>
<keyword id="KW-0433">Leucine-rich repeat</keyword>
<keyword id="KW-0472">Membrane</keyword>
<keyword id="KW-0520">NAD</keyword>
<keyword id="KW-0675">Receptor</keyword>
<keyword id="KW-1185">Reference proteome</keyword>
<keyword id="KW-0677">Repeat</keyword>
<keyword id="KW-0732">Signal</keyword>
<keyword id="KW-0812">Transmembrane</keyword>
<keyword id="KW-1133">Transmembrane helix</keyword>
<keyword id="KW-0832">Ubl conjugation</keyword>
<comment type="function">
    <text evidence="1">Transmembrane receptor that functions as a pattern recognition receptor recognizing pathogen- and damage-associated molecular patterns (PAMPs and DAMPs) to induce innate immune responses via downstream signaling pathways. At the plasma membrane, cooperates with LY96 to mediate the innate immune response to bacterial lipopolysaccharide (LPS). Also involved in LPS-independent inflammatory responses triggered by free fatty acids, such as palmitate, and Ni(2+). Mechanistically, acts via MYD88, TIRAP and TRAF6, leading to NF-kappa-B activation, cytokine secretion and the inflammatory response. Alternatively, CD14-mediated TLR4 internalization via endocytosis is associated with the initiation of a MYD88-independent signaling via the TICAM1-TBK1-IRF3 axis leading to type I interferon production. In addition to the secretion of proinflammatory cytokines, initiates the activation of NLRP3 inflammasome and formation of a positive feedback loop between autophagy and NF-kappa-B signaling cascade. In complex with TLR6, promotes inflammation in monocytes/macrophages by associating with TLR6 and the receptor CD86. Upon ligand binding, such as oxLDL or amyloid-beta 42, the TLR4:TLR6 complex is internalized and triggers inflammatory response, leading to NF-kappa-B-dependent production of CXCL1, CXCL2 and CCL9 cytokines, via MYD88 signaling pathway, and CCL5 cytokine, via TICAM1 signaling pathway. In myeloid dendritic cells, vesicular stomatitis virus glycoprotein G but not LPS promotes the activation of IRF7, leading to type I IFN production in a CD14-dependent manner.</text>
</comment>
<comment type="subunit">
    <text evidence="1 2">Belongs to the lipopolysaccharide (LPS) receptor, a multi-protein complex containing at least CD14, LY96 and TLR4. Binding to bacterial LPS leads to homodimerization. Interacts with LY96 via the extracellular domain. Interacts with MYD88 and TIRAP via their respective TIR domains. Interacts with TICAM2. Interacts with NOX4. Interacts with CNPY3 and HSP90B1; this interaction is required for proper folding in the endoplasmic reticulum. Interacts with MAP3K21; this interaction leads to negative regulation of TLR4 signaling. Interacts with CD36, following CD36 stimulation by oxLDL or amyloid-beta 42, and forms a heterodimer with TLR6. The trimeric complex is internalized and triggers inflammatory response. LYN kinase activity facilitates TLR4-TLR6 heterodimerization and signal initiation. Interacts with TICAM1 in response to LPS in a WDFY1-dependent manner. Interacts with WDFY1 in response to LPS. Interacts with SMPDL3B. Interacts with CEACAM1; upon lipopolysaccharide stimulation, forms a complex including TLR4 and the phosphorylated form of SYK and CEACAM1, which in turn, recruits PTPN6 that dephosphorylates SYK, reducing the production of reactive oxygen species (ROS) and lysosome disruption, which in turn, reduces the activity of the inflammasome. Interacts with RFTN1; the interaction occurs in response to lipopolysaccharide stimulation. Interacts with SCIMP; the interaction occurs in response to lipopolysaccharide stimulation and is enhanced by phosphorylation of SCIMP by LYN (By similarity). This interaction facilitates the phosphorylation of TLR4 by LYN which elicits a selective cytokine response in macrophages (By similarity). Interacts with TRAF3IP3 (By similarity). Interacts with TREM1; this interaction enhances TLR4-mediated inflammatory response (By similarity). Interacts with ZG16B/PAUF (By similarity). Interacts with CD82; this interaction inhibits TLR4-mediated signaling pathway (By similarity).</text>
</comment>
<comment type="subcellular location">
    <subcellularLocation>
        <location evidence="1">Cell membrane</location>
        <topology evidence="1">Single-pass type I membrane protein</topology>
    </subcellularLocation>
    <subcellularLocation>
        <location evidence="1">Early endosome</location>
    </subcellularLocation>
    <subcellularLocation>
        <location evidence="2">Cell projection</location>
        <location evidence="2">Ruffle</location>
    </subcellularLocation>
    <text evidence="1">Upon complex formation with CD36 and TLR6, internalized through dynamin-dependent endocytosis. Colocalizes with RFTN1 at cell membrane and then together with RFTN1 moves to endosomes, upon lipopolysaccharide stimulation.</text>
</comment>
<comment type="domain">
    <text evidence="1">The TIR domain mediates interaction with NOX4.</text>
</comment>
<comment type="PTM">
    <text evidence="2">Phosphorylated on tyrosine residues by LYN after binding lipopolysaccharide.</text>
</comment>
<comment type="PTM">
    <text evidence="1">Ubiquitinated by RNF128 via 'Lys-28'-linked polyubiquitin chains, leading to proteasomal degradation.</text>
</comment>
<comment type="similarity">
    <text evidence="5">Belongs to the Toll-like receptor family.</text>
</comment>
<comment type="caution">
    <text evidence="1 5">In some plant proteins and in human SARM1, the TIR domain has NAD(+) hydrolase (NADase) activity (By similarity). However, despite the presence of the catalytic Asp residue, the isolated TIR domain of human TLR4 lacks NADase activity (By similarity). Based on this, it is unlikely that Toll-like receptors have NADase activity.</text>
</comment>
<evidence type="ECO:0000250" key="1">
    <source>
        <dbReference type="UniProtKB" id="O00206"/>
    </source>
</evidence>
<evidence type="ECO:0000250" key="2">
    <source>
        <dbReference type="UniProtKB" id="Q9QUK6"/>
    </source>
</evidence>
<evidence type="ECO:0000255" key="3"/>
<evidence type="ECO:0000255" key="4">
    <source>
        <dbReference type="PROSITE-ProRule" id="PRU00204"/>
    </source>
</evidence>
<evidence type="ECO:0000305" key="5"/>
<accession>P58727</accession>
<organism>
    <name type="scientific">Felis catus</name>
    <name type="common">Cat</name>
    <name type="synonym">Felis silvestris catus</name>
    <dbReference type="NCBI Taxonomy" id="9685"/>
    <lineage>
        <taxon>Eukaryota</taxon>
        <taxon>Metazoa</taxon>
        <taxon>Chordata</taxon>
        <taxon>Craniata</taxon>
        <taxon>Vertebrata</taxon>
        <taxon>Euteleostomi</taxon>
        <taxon>Mammalia</taxon>
        <taxon>Eutheria</taxon>
        <taxon>Laurasiatheria</taxon>
        <taxon>Carnivora</taxon>
        <taxon>Feliformia</taxon>
        <taxon>Felidae</taxon>
        <taxon>Felinae</taxon>
        <taxon>Felis</taxon>
    </lineage>
</organism>
<feature type="signal peptide" evidence="3">
    <location>
        <begin position="1"/>
        <end position="23"/>
    </location>
</feature>
<feature type="chain" id="PRO_0000034719" description="Toll-like receptor 4">
    <location>
        <begin position="24"/>
        <end position="833"/>
    </location>
</feature>
<feature type="topological domain" description="Extracellular" evidence="3">
    <location>
        <begin position="24"/>
        <end position="632"/>
    </location>
</feature>
<feature type="transmembrane region" description="Helical" evidence="3">
    <location>
        <begin position="633"/>
        <end position="653"/>
    </location>
</feature>
<feature type="topological domain" description="Cytoplasmic" evidence="3">
    <location>
        <begin position="654"/>
        <end position="833"/>
    </location>
</feature>
<feature type="domain" description="LRRNT">
    <location>
        <begin position="24"/>
        <end position="54"/>
    </location>
</feature>
<feature type="repeat" description="LRR 1">
    <location>
        <begin position="55"/>
        <end position="76"/>
    </location>
</feature>
<feature type="repeat" description="LRR 2">
    <location>
        <begin position="79"/>
        <end position="100"/>
    </location>
</feature>
<feature type="repeat" description="LRR 3">
    <location>
        <begin position="103"/>
        <end position="124"/>
    </location>
</feature>
<feature type="repeat" description="LRR 4">
    <location>
        <begin position="127"/>
        <end position="148"/>
    </location>
</feature>
<feature type="repeat" description="LRR 5">
    <location>
        <begin position="151"/>
        <end position="172"/>
    </location>
</feature>
<feature type="repeat" description="LRR 6">
    <location>
        <begin position="176"/>
        <end position="197"/>
    </location>
</feature>
<feature type="repeat" description="LRR 7">
    <location>
        <begin position="205"/>
        <end position="225"/>
    </location>
</feature>
<feature type="repeat" description="LRR 8">
    <location>
        <begin position="227"/>
        <end position="236"/>
    </location>
</feature>
<feature type="repeat" description="LRR 9">
    <location>
        <begin position="352"/>
        <end position="373"/>
    </location>
</feature>
<feature type="repeat" description="LRR 10">
    <location>
        <begin position="374"/>
        <end position="394"/>
    </location>
</feature>
<feature type="repeat" description="LRR 11">
    <location>
        <begin position="400"/>
        <end position="420"/>
    </location>
</feature>
<feature type="repeat" description="LRR 12">
    <location>
        <begin position="423"/>
        <end position="444"/>
    </location>
</feature>
<feature type="repeat" description="LRR 13">
    <location>
        <begin position="448"/>
        <end position="456"/>
    </location>
</feature>
<feature type="repeat" description="LRR 14">
    <location>
        <begin position="472"/>
        <end position="495"/>
    </location>
</feature>
<feature type="repeat" description="LRR 15">
    <location>
        <begin position="497"/>
        <end position="518"/>
    </location>
</feature>
<feature type="repeat" description="LRR 16">
    <location>
        <begin position="521"/>
        <end position="542"/>
    </location>
</feature>
<feature type="repeat" description="LRR 17">
    <location>
        <begin position="545"/>
        <end position="565"/>
    </location>
</feature>
<feature type="domain" description="LRRCT">
    <location>
        <begin position="579"/>
        <end position="630"/>
    </location>
</feature>
<feature type="domain" description="TIR" evidence="4">
    <location>
        <begin position="673"/>
        <end position="816"/>
    </location>
</feature>
<feature type="glycosylation site" description="N-linked (GlcNAc...) asparagine" evidence="3">
    <location>
        <position position="35"/>
    </location>
</feature>
<feature type="glycosylation site" description="N-linked (GlcNAc...) asparagine" evidence="3">
    <location>
        <position position="173"/>
    </location>
</feature>
<feature type="glycosylation site" description="N-linked (GlcNAc...) asparagine" evidence="3">
    <location>
        <position position="205"/>
    </location>
</feature>
<feature type="glycosylation site" description="N-linked (GlcNAc...) asparagine" evidence="3">
    <location>
        <position position="238"/>
    </location>
</feature>
<feature type="glycosylation site" description="N-linked (GlcNAc...) asparagine" evidence="3">
    <location>
        <position position="309"/>
    </location>
</feature>
<feature type="glycosylation site" description="N-linked (GlcNAc...) asparagine" evidence="3">
    <location>
        <position position="497"/>
    </location>
</feature>
<feature type="glycosylation site" description="N-linked (GlcNAc...) asparagine" evidence="3">
    <location>
        <position position="526"/>
    </location>
</feature>
<feature type="glycosylation site" description="N-linked (GlcNAc...) asparagine" evidence="3">
    <location>
        <position position="570"/>
    </location>
</feature>
<feature type="glycosylation site" description="N-linked (GlcNAc...) asparagine" evidence="3">
    <location>
        <position position="575"/>
    </location>
</feature>
<feature type="glycosylation site" description="N-linked (GlcNAc...) asparagine" evidence="3">
    <location>
        <position position="625"/>
    </location>
</feature>
<feature type="disulfide bond" evidence="1">
    <location>
        <begin position="29"/>
        <end position="40"/>
    </location>
</feature>
<feature type="disulfide bond" evidence="1">
    <location>
        <begin position="281"/>
        <end position="306"/>
    </location>
</feature>
<feature type="disulfide bond" evidence="1">
    <location>
        <begin position="390"/>
        <end position="391"/>
    </location>
</feature>
<feature type="disulfide bond" evidence="1">
    <location>
        <begin position="583"/>
        <end position="609"/>
    </location>
</feature>
<feature type="disulfide bond" evidence="1">
    <location>
        <begin position="585"/>
        <end position="628"/>
    </location>
</feature>
<proteinExistence type="evidence at transcript level"/>
<gene>
    <name type="primary">TLR4</name>
</gene>
<protein>
    <recommendedName>
        <fullName>Toll-like receptor 4</fullName>
    </recommendedName>
    <cdAntigenName>CD284</cdAntigenName>
</protein>
<name>TLR4_FELCA</name>
<sequence length="833" mass="95592">MMPPTRLAGTLIPAMAFLSCLRPESWDPCVEVVPNITYQCMDLNLHKIPDNIPSSTKDLDMSFNPLRNLGSHSFSNFPELQVLDLSRCEIQIIEDDAYQGLNHLSILILTGNPIQRLFPGAFSGLSSLQTLVAVETNIASLEDFPIGHLKTLKELNVAHNLIHSFKLPEYFSNMSNLEYLDLSNNKIQNIYHKDLQVLHQKPLLNLSLDLSLNPLDFIQPGAFKEVKLRELTLRSNFNSTDVMKASIQGLAGLQIHQLVLGEFKNERNLGRFDKSILEGLCNLIIEKFRIAYFDKFSEDAIDSFNCLANVSTISLVHLYFKGLKQLPKNLGWQRLELVNCEFEQFPTWKLDPLKELVFSANEVRNAFTQVKLESLEFLDLSRNDFSLKSCCSERDLGTTRLKHLDLSFNNIITISSNFLGLEQLEYLDFQHSSLKQVSDFSVFLPLKNLRYLDISYTHTQVAFHGIFNGLISLQILKMAGNSFQDNFLPNIFMELTNLTILDLSDCQLEQVSQVAFNSLPKLQLLNMSHNHLLSLDTLPYEPLHSLQTLDCSFNRIVASKEQELRHFPSNLSSLNLTRNDFACVCEHQSFLQWVKDQRQLLVEVEQMVCAKPLDMQGMPMLNFRNATCQVRKTIITGSVFTVLLVFLVVVLVYKFYFHLMLLAGCKKYSRGESTYDAFVIYSSQDEDWVRNELVKNLEEGVPPFQLCLHYRDFIPGVAIAANIIQEGFHKSRKVIVVVSQHFIQSRWCIFEYGIAQTWQFLSSRAGIIFIVLQKLEKSLLRQQVELYRLLNRNTYLEWEDSVLGRHIFWRRLRKALLDGKPRCPEGMADAEGS</sequence>